<feature type="chain" id="PRO_0000293900" description="Small ribosomal subunit protein uS3">
    <location>
        <begin position="1"/>
        <end position="217"/>
    </location>
</feature>
<feature type="domain" description="KH type-2" evidence="1">
    <location>
        <begin position="38"/>
        <end position="106"/>
    </location>
</feature>
<evidence type="ECO:0000255" key="1">
    <source>
        <dbReference type="HAMAP-Rule" id="MF_01309"/>
    </source>
</evidence>
<evidence type="ECO:0000305" key="2"/>
<proteinExistence type="inferred from homology"/>
<keyword id="KW-0687">Ribonucleoprotein</keyword>
<keyword id="KW-0689">Ribosomal protein</keyword>
<keyword id="KW-0694">RNA-binding</keyword>
<keyword id="KW-0699">rRNA-binding</keyword>
<protein>
    <recommendedName>
        <fullName evidence="1">Small ribosomal subunit protein uS3</fullName>
    </recommendedName>
    <alternativeName>
        <fullName evidence="2">30S ribosomal protein S3</fullName>
    </alternativeName>
</protein>
<organism>
    <name type="scientific">Streptococcus suis (strain 05ZYH33)</name>
    <dbReference type="NCBI Taxonomy" id="391295"/>
    <lineage>
        <taxon>Bacteria</taxon>
        <taxon>Bacillati</taxon>
        <taxon>Bacillota</taxon>
        <taxon>Bacilli</taxon>
        <taxon>Lactobacillales</taxon>
        <taxon>Streptococcaceae</taxon>
        <taxon>Streptococcus</taxon>
    </lineage>
</organism>
<gene>
    <name evidence="1" type="primary">rpsC</name>
    <name type="ordered locus">SSU05_0077</name>
</gene>
<dbReference type="EMBL" id="CP000407">
    <property type="protein sequence ID" value="ABP89049.1"/>
    <property type="molecule type" value="Genomic_DNA"/>
</dbReference>
<dbReference type="SMR" id="A4VSG0"/>
<dbReference type="STRING" id="391295.SSU05_0077"/>
<dbReference type="KEGG" id="ssu:SSU05_0077"/>
<dbReference type="eggNOG" id="COG0092">
    <property type="taxonomic scope" value="Bacteria"/>
</dbReference>
<dbReference type="HOGENOM" id="CLU_058591_0_2_9"/>
<dbReference type="GO" id="GO:0022627">
    <property type="term" value="C:cytosolic small ribosomal subunit"/>
    <property type="evidence" value="ECO:0007669"/>
    <property type="project" value="TreeGrafter"/>
</dbReference>
<dbReference type="GO" id="GO:0003729">
    <property type="term" value="F:mRNA binding"/>
    <property type="evidence" value="ECO:0007669"/>
    <property type="project" value="UniProtKB-UniRule"/>
</dbReference>
<dbReference type="GO" id="GO:0019843">
    <property type="term" value="F:rRNA binding"/>
    <property type="evidence" value="ECO:0007669"/>
    <property type="project" value="UniProtKB-UniRule"/>
</dbReference>
<dbReference type="GO" id="GO:0003735">
    <property type="term" value="F:structural constituent of ribosome"/>
    <property type="evidence" value="ECO:0007669"/>
    <property type="project" value="InterPro"/>
</dbReference>
<dbReference type="GO" id="GO:0006412">
    <property type="term" value="P:translation"/>
    <property type="evidence" value="ECO:0007669"/>
    <property type="project" value="UniProtKB-UniRule"/>
</dbReference>
<dbReference type="CDD" id="cd02412">
    <property type="entry name" value="KH-II_30S_S3"/>
    <property type="match status" value="1"/>
</dbReference>
<dbReference type="FunFam" id="3.30.1140.32:FF:000001">
    <property type="entry name" value="30S ribosomal protein S3"/>
    <property type="match status" value="1"/>
</dbReference>
<dbReference type="FunFam" id="3.30.300.20:FF:000001">
    <property type="entry name" value="30S ribosomal protein S3"/>
    <property type="match status" value="1"/>
</dbReference>
<dbReference type="Gene3D" id="3.30.300.20">
    <property type="match status" value="1"/>
</dbReference>
<dbReference type="Gene3D" id="3.30.1140.32">
    <property type="entry name" value="Ribosomal protein S3, C-terminal domain"/>
    <property type="match status" value="1"/>
</dbReference>
<dbReference type="HAMAP" id="MF_01309_B">
    <property type="entry name" value="Ribosomal_uS3_B"/>
    <property type="match status" value="1"/>
</dbReference>
<dbReference type="InterPro" id="IPR004087">
    <property type="entry name" value="KH_dom"/>
</dbReference>
<dbReference type="InterPro" id="IPR015946">
    <property type="entry name" value="KH_dom-like_a/b"/>
</dbReference>
<dbReference type="InterPro" id="IPR004044">
    <property type="entry name" value="KH_dom_type_2"/>
</dbReference>
<dbReference type="InterPro" id="IPR009019">
    <property type="entry name" value="KH_sf_prok-type"/>
</dbReference>
<dbReference type="InterPro" id="IPR036419">
    <property type="entry name" value="Ribosomal_S3_C_sf"/>
</dbReference>
<dbReference type="InterPro" id="IPR005704">
    <property type="entry name" value="Ribosomal_uS3_bac-typ"/>
</dbReference>
<dbReference type="InterPro" id="IPR001351">
    <property type="entry name" value="Ribosomal_uS3_C"/>
</dbReference>
<dbReference type="InterPro" id="IPR018280">
    <property type="entry name" value="Ribosomal_uS3_CS"/>
</dbReference>
<dbReference type="NCBIfam" id="TIGR01009">
    <property type="entry name" value="rpsC_bact"/>
    <property type="match status" value="1"/>
</dbReference>
<dbReference type="PANTHER" id="PTHR11760">
    <property type="entry name" value="30S/40S RIBOSOMAL PROTEIN S3"/>
    <property type="match status" value="1"/>
</dbReference>
<dbReference type="PANTHER" id="PTHR11760:SF19">
    <property type="entry name" value="SMALL RIBOSOMAL SUBUNIT PROTEIN US3C"/>
    <property type="match status" value="1"/>
</dbReference>
<dbReference type="Pfam" id="PF07650">
    <property type="entry name" value="KH_2"/>
    <property type="match status" value="1"/>
</dbReference>
<dbReference type="Pfam" id="PF00189">
    <property type="entry name" value="Ribosomal_S3_C"/>
    <property type="match status" value="1"/>
</dbReference>
<dbReference type="SMART" id="SM00322">
    <property type="entry name" value="KH"/>
    <property type="match status" value="1"/>
</dbReference>
<dbReference type="SUPFAM" id="SSF54814">
    <property type="entry name" value="Prokaryotic type KH domain (KH-domain type II)"/>
    <property type="match status" value="1"/>
</dbReference>
<dbReference type="SUPFAM" id="SSF54821">
    <property type="entry name" value="Ribosomal protein S3 C-terminal domain"/>
    <property type="match status" value="1"/>
</dbReference>
<dbReference type="PROSITE" id="PS50823">
    <property type="entry name" value="KH_TYPE_2"/>
    <property type="match status" value="1"/>
</dbReference>
<dbReference type="PROSITE" id="PS00548">
    <property type="entry name" value="RIBOSOMAL_S3"/>
    <property type="match status" value="1"/>
</dbReference>
<reference key="1">
    <citation type="journal article" date="2007" name="PLoS ONE">
        <title>A glimpse of streptococcal toxic shock syndrome from comparative genomics of S. suis 2 Chinese isolates.</title>
        <authorList>
            <person name="Chen C."/>
            <person name="Tang J."/>
            <person name="Dong W."/>
            <person name="Wang C."/>
            <person name="Feng Y."/>
            <person name="Wang J."/>
            <person name="Zheng F."/>
            <person name="Pan X."/>
            <person name="Liu D."/>
            <person name="Li M."/>
            <person name="Song Y."/>
            <person name="Zhu X."/>
            <person name="Sun H."/>
            <person name="Feng T."/>
            <person name="Guo Z."/>
            <person name="Ju A."/>
            <person name="Ge J."/>
            <person name="Dong Y."/>
            <person name="Sun W."/>
            <person name="Jiang Y."/>
            <person name="Wang J."/>
            <person name="Yan J."/>
            <person name="Yang H."/>
            <person name="Wang X."/>
            <person name="Gao G.F."/>
            <person name="Yang R."/>
            <person name="Wang J."/>
            <person name="Yu J."/>
        </authorList>
    </citation>
    <scope>NUCLEOTIDE SEQUENCE [LARGE SCALE GENOMIC DNA]</scope>
    <source>
        <strain>05ZYH33</strain>
    </source>
</reference>
<sequence length="217" mass="24121">MGQKVHPIGMRVGIIRDWDAKWYAEKEYADYLHEDLAIRNFIKKELADASTSTIEIERAVNKVIVSIHTAKPGMVIGKAGSNVDALRAQLNKLTGKQVHINIIEIKQPDLDAHLVGESIARQLEQRVAFRRAQKQAIQRAMRAGAKGIKTQVSGRLNGADIARAEGYSEGTVPLHTLRADIDYAWEEALTTYGKLGVKVWIYRGEVLPARKNTKGGK</sequence>
<comment type="function">
    <text evidence="1">Binds the lower part of the 30S subunit head. Binds mRNA in the 70S ribosome, positioning it for translation.</text>
</comment>
<comment type="subunit">
    <text evidence="1">Part of the 30S ribosomal subunit. Forms a tight complex with proteins S10 and S14.</text>
</comment>
<comment type="similarity">
    <text evidence="1">Belongs to the universal ribosomal protein uS3 family.</text>
</comment>
<name>RS3_STRSY</name>
<accession>A4VSG0</accession>